<keyword id="KW-0687">Ribonucleoprotein</keyword>
<keyword id="KW-0689">Ribosomal protein</keyword>
<dbReference type="EMBL" id="AM260525">
    <property type="protein sequence ID" value="CAK02529.1"/>
    <property type="molecule type" value="Genomic_DNA"/>
</dbReference>
<dbReference type="RefSeq" id="WP_012232563.1">
    <property type="nucleotide sequence ID" value="NC_010161.1"/>
</dbReference>
<dbReference type="SMR" id="A9IZE1"/>
<dbReference type="KEGG" id="btr:BT_2573"/>
<dbReference type="eggNOG" id="COG0228">
    <property type="taxonomic scope" value="Bacteria"/>
</dbReference>
<dbReference type="HOGENOM" id="CLU_100590_3_1_5"/>
<dbReference type="Proteomes" id="UP000001592">
    <property type="component" value="Chromosome"/>
</dbReference>
<dbReference type="GO" id="GO:0005737">
    <property type="term" value="C:cytoplasm"/>
    <property type="evidence" value="ECO:0007669"/>
    <property type="project" value="UniProtKB-ARBA"/>
</dbReference>
<dbReference type="GO" id="GO:0015935">
    <property type="term" value="C:small ribosomal subunit"/>
    <property type="evidence" value="ECO:0007669"/>
    <property type="project" value="TreeGrafter"/>
</dbReference>
<dbReference type="GO" id="GO:0003735">
    <property type="term" value="F:structural constituent of ribosome"/>
    <property type="evidence" value="ECO:0007669"/>
    <property type="project" value="InterPro"/>
</dbReference>
<dbReference type="GO" id="GO:0006412">
    <property type="term" value="P:translation"/>
    <property type="evidence" value="ECO:0007669"/>
    <property type="project" value="UniProtKB-UniRule"/>
</dbReference>
<dbReference type="Gene3D" id="3.30.1320.10">
    <property type="match status" value="1"/>
</dbReference>
<dbReference type="HAMAP" id="MF_00385">
    <property type="entry name" value="Ribosomal_bS16"/>
    <property type="match status" value="1"/>
</dbReference>
<dbReference type="InterPro" id="IPR000307">
    <property type="entry name" value="Ribosomal_bS16"/>
</dbReference>
<dbReference type="InterPro" id="IPR023803">
    <property type="entry name" value="Ribosomal_bS16_dom_sf"/>
</dbReference>
<dbReference type="NCBIfam" id="TIGR00002">
    <property type="entry name" value="S16"/>
    <property type="match status" value="1"/>
</dbReference>
<dbReference type="PANTHER" id="PTHR12919">
    <property type="entry name" value="30S RIBOSOMAL PROTEIN S16"/>
    <property type="match status" value="1"/>
</dbReference>
<dbReference type="PANTHER" id="PTHR12919:SF20">
    <property type="entry name" value="SMALL RIBOSOMAL SUBUNIT PROTEIN BS16M"/>
    <property type="match status" value="1"/>
</dbReference>
<dbReference type="Pfam" id="PF00886">
    <property type="entry name" value="Ribosomal_S16"/>
    <property type="match status" value="1"/>
</dbReference>
<dbReference type="SUPFAM" id="SSF54565">
    <property type="entry name" value="Ribosomal protein S16"/>
    <property type="match status" value="1"/>
</dbReference>
<evidence type="ECO:0000255" key="1">
    <source>
        <dbReference type="HAMAP-Rule" id="MF_00385"/>
    </source>
</evidence>
<evidence type="ECO:0000256" key="2">
    <source>
        <dbReference type="SAM" id="MobiDB-lite"/>
    </source>
</evidence>
<evidence type="ECO:0000305" key="3"/>
<protein>
    <recommendedName>
        <fullName evidence="1">Small ribosomal subunit protein bS16</fullName>
    </recommendedName>
    <alternativeName>
        <fullName evidence="3">30S ribosomal protein S16</fullName>
    </alternativeName>
</protein>
<accession>A9IZE1</accession>
<proteinExistence type="inferred from homology"/>
<sequence>MALKIRLSRGGSKKRPYYHIVVADVRSPRDGRFLERVGAWDPMLPKDGPRVKLNEERIQYWLGQGAQPTDRVLRFLDAAGLKKRPARNNPHKGEPGKKAQERIAAAKQAAEDAAAAAEADSASE</sequence>
<name>RS16_BART1</name>
<reference key="1">
    <citation type="journal article" date="2007" name="Nat. Genet.">
        <title>Genomic analysis of Bartonella identifies type IV secretion systems as host adaptability factors.</title>
        <authorList>
            <person name="Saenz H.L."/>
            <person name="Engel P."/>
            <person name="Stoeckli M.C."/>
            <person name="Lanz C."/>
            <person name="Raddatz G."/>
            <person name="Vayssier-Taussat M."/>
            <person name="Birtles R."/>
            <person name="Schuster S.C."/>
            <person name="Dehio C."/>
        </authorList>
    </citation>
    <scope>NUCLEOTIDE SEQUENCE [LARGE SCALE GENOMIC DNA]</scope>
    <source>
        <strain>CIP 105476 / IBS 506</strain>
    </source>
</reference>
<organism>
    <name type="scientific">Bartonella tribocorum (strain CIP 105476 / IBS 506)</name>
    <dbReference type="NCBI Taxonomy" id="382640"/>
    <lineage>
        <taxon>Bacteria</taxon>
        <taxon>Pseudomonadati</taxon>
        <taxon>Pseudomonadota</taxon>
        <taxon>Alphaproteobacteria</taxon>
        <taxon>Hyphomicrobiales</taxon>
        <taxon>Bartonellaceae</taxon>
        <taxon>Bartonella</taxon>
    </lineage>
</organism>
<comment type="similarity">
    <text evidence="1">Belongs to the bacterial ribosomal protein bS16 family.</text>
</comment>
<feature type="chain" id="PRO_1000080136" description="Small ribosomal subunit protein bS16">
    <location>
        <begin position="1"/>
        <end position="124"/>
    </location>
</feature>
<feature type="region of interest" description="Disordered" evidence="2">
    <location>
        <begin position="81"/>
        <end position="124"/>
    </location>
</feature>
<feature type="compositionally biased region" description="Basic residues" evidence="2">
    <location>
        <begin position="81"/>
        <end position="90"/>
    </location>
</feature>
<feature type="compositionally biased region" description="Basic and acidic residues" evidence="2">
    <location>
        <begin position="91"/>
        <end position="101"/>
    </location>
</feature>
<feature type="compositionally biased region" description="Low complexity" evidence="2">
    <location>
        <begin position="102"/>
        <end position="124"/>
    </location>
</feature>
<gene>
    <name evidence="1" type="primary">rpsP</name>
    <name type="ordered locus">BT_2573</name>
</gene>